<keyword id="KW-0028">Amino-acid biosynthesis</keyword>
<keyword id="KW-0963">Cytoplasm</keyword>
<keyword id="KW-0554">One-carbon metabolism</keyword>
<keyword id="KW-0663">Pyridoxal phosphate</keyword>
<keyword id="KW-1185">Reference proteome</keyword>
<keyword id="KW-0808">Transferase</keyword>
<protein>
    <recommendedName>
        <fullName evidence="1">Serine hydroxymethyltransferase</fullName>
        <shortName evidence="1">SHMT</shortName>
        <shortName evidence="1">Serine methylase</shortName>
        <ecNumber evidence="1">2.1.2.1</ecNumber>
    </recommendedName>
</protein>
<gene>
    <name evidence="1" type="primary">glyA</name>
    <name type="ordered locus">Jann_2991</name>
</gene>
<name>GLYA_JANSC</name>
<feature type="chain" id="PRO_0000369930" description="Serine hydroxymethyltransferase">
    <location>
        <begin position="1"/>
        <end position="439"/>
    </location>
</feature>
<feature type="region of interest" description="Disordered" evidence="2">
    <location>
        <begin position="1"/>
        <end position="20"/>
    </location>
</feature>
<feature type="binding site" evidence="1">
    <location>
        <position position="136"/>
    </location>
    <ligand>
        <name>(6S)-5,6,7,8-tetrahydrofolate</name>
        <dbReference type="ChEBI" id="CHEBI:57453"/>
    </ligand>
</feature>
<feature type="binding site" evidence="1">
    <location>
        <begin position="140"/>
        <end position="142"/>
    </location>
    <ligand>
        <name>(6S)-5,6,7,8-tetrahydrofolate</name>
        <dbReference type="ChEBI" id="CHEBI:57453"/>
    </ligand>
</feature>
<feature type="site" description="Plays an important role in substrate specificity" evidence="1">
    <location>
        <position position="244"/>
    </location>
</feature>
<feature type="modified residue" description="N6-(pyridoxal phosphate)lysine" evidence="1">
    <location>
        <position position="245"/>
    </location>
</feature>
<organism>
    <name type="scientific">Jannaschia sp. (strain CCS1)</name>
    <dbReference type="NCBI Taxonomy" id="290400"/>
    <lineage>
        <taxon>Bacteria</taxon>
        <taxon>Pseudomonadati</taxon>
        <taxon>Pseudomonadota</taxon>
        <taxon>Alphaproteobacteria</taxon>
        <taxon>Rhodobacterales</taxon>
        <taxon>Roseobacteraceae</taxon>
        <taxon>Jannaschia</taxon>
    </lineage>
</organism>
<evidence type="ECO:0000255" key="1">
    <source>
        <dbReference type="HAMAP-Rule" id="MF_00051"/>
    </source>
</evidence>
<evidence type="ECO:0000256" key="2">
    <source>
        <dbReference type="SAM" id="MobiDB-lite"/>
    </source>
</evidence>
<comment type="function">
    <text evidence="1">Catalyzes the reversible interconversion of serine and glycine with tetrahydrofolate (THF) serving as the one-carbon carrier. This reaction serves as the major source of one-carbon groups required for the biosynthesis of purines, thymidylate, methionine, and other important biomolecules. Also exhibits THF-independent aldolase activity toward beta-hydroxyamino acids, producing glycine and aldehydes, via a retro-aldol mechanism.</text>
</comment>
<comment type="catalytic activity">
    <reaction evidence="1">
        <text>(6R)-5,10-methylene-5,6,7,8-tetrahydrofolate + glycine + H2O = (6S)-5,6,7,8-tetrahydrofolate + L-serine</text>
        <dbReference type="Rhea" id="RHEA:15481"/>
        <dbReference type="ChEBI" id="CHEBI:15377"/>
        <dbReference type="ChEBI" id="CHEBI:15636"/>
        <dbReference type="ChEBI" id="CHEBI:33384"/>
        <dbReference type="ChEBI" id="CHEBI:57305"/>
        <dbReference type="ChEBI" id="CHEBI:57453"/>
        <dbReference type="EC" id="2.1.2.1"/>
    </reaction>
</comment>
<comment type="cofactor">
    <cofactor evidence="1">
        <name>pyridoxal 5'-phosphate</name>
        <dbReference type="ChEBI" id="CHEBI:597326"/>
    </cofactor>
</comment>
<comment type="pathway">
    <text evidence="1">One-carbon metabolism; tetrahydrofolate interconversion.</text>
</comment>
<comment type="pathway">
    <text evidence="1">Amino-acid biosynthesis; glycine biosynthesis; glycine from L-serine: step 1/1.</text>
</comment>
<comment type="subunit">
    <text evidence="1">Homodimer.</text>
</comment>
<comment type="subcellular location">
    <subcellularLocation>
        <location evidence="1">Cytoplasm</location>
    </subcellularLocation>
</comment>
<comment type="similarity">
    <text evidence="1">Belongs to the SHMT family.</text>
</comment>
<accession>Q28N04</accession>
<reference key="1">
    <citation type="submission" date="2006-02" db="EMBL/GenBank/DDBJ databases">
        <title>Complete sequence of chromosome of Jannaschia sp. CCS1.</title>
        <authorList>
            <consortium name="US DOE Joint Genome Institute"/>
            <person name="Copeland A."/>
            <person name="Lucas S."/>
            <person name="Lapidus A."/>
            <person name="Barry K."/>
            <person name="Detter J.C."/>
            <person name="Glavina del Rio T."/>
            <person name="Hammon N."/>
            <person name="Israni S."/>
            <person name="Pitluck S."/>
            <person name="Brettin T."/>
            <person name="Bruce D."/>
            <person name="Han C."/>
            <person name="Tapia R."/>
            <person name="Gilna P."/>
            <person name="Chertkov O."/>
            <person name="Saunders E."/>
            <person name="Schmutz J."/>
            <person name="Larimer F."/>
            <person name="Land M."/>
            <person name="Kyrpides N."/>
            <person name="Lykidis A."/>
            <person name="Moran M.A."/>
            <person name="Belas R."/>
            <person name="Ye W."/>
            <person name="Buchan A."/>
            <person name="Gonzalez J.M."/>
            <person name="Schell M.A."/>
            <person name="Richardson P."/>
        </authorList>
    </citation>
    <scope>NUCLEOTIDE SEQUENCE [LARGE SCALE GENOMIC DNA]</scope>
    <source>
        <strain>CCS1</strain>
    </source>
</reference>
<dbReference type="EC" id="2.1.2.1" evidence="1"/>
<dbReference type="EMBL" id="CP000264">
    <property type="protein sequence ID" value="ABD55908.1"/>
    <property type="molecule type" value="Genomic_DNA"/>
</dbReference>
<dbReference type="RefSeq" id="WP_011456112.1">
    <property type="nucleotide sequence ID" value="NC_007802.1"/>
</dbReference>
<dbReference type="SMR" id="Q28N04"/>
<dbReference type="STRING" id="290400.Jann_2991"/>
<dbReference type="KEGG" id="jan:Jann_2991"/>
<dbReference type="eggNOG" id="COG0112">
    <property type="taxonomic scope" value="Bacteria"/>
</dbReference>
<dbReference type="HOGENOM" id="CLU_022477_2_1_5"/>
<dbReference type="OrthoDB" id="9803846at2"/>
<dbReference type="UniPathway" id="UPA00193"/>
<dbReference type="UniPathway" id="UPA00288">
    <property type="reaction ID" value="UER01023"/>
</dbReference>
<dbReference type="Proteomes" id="UP000008326">
    <property type="component" value="Chromosome"/>
</dbReference>
<dbReference type="GO" id="GO:0005829">
    <property type="term" value="C:cytosol"/>
    <property type="evidence" value="ECO:0007669"/>
    <property type="project" value="TreeGrafter"/>
</dbReference>
<dbReference type="GO" id="GO:0004372">
    <property type="term" value="F:glycine hydroxymethyltransferase activity"/>
    <property type="evidence" value="ECO:0007669"/>
    <property type="project" value="UniProtKB-UniRule"/>
</dbReference>
<dbReference type="GO" id="GO:0030170">
    <property type="term" value="F:pyridoxal phosphate binding"/>
    <property type="evidence" value="ECO:0007669"/>
    <property type="project" value="UniProtKB-UniRule"/>
</dbReference>
<dbReference type="GO" id="GO:0019264">
    <property type="term" value="P:glycine biosynthetic process from serine"/>
    <property type="evidence" value="ECO:0007669"/>
    <property type="project" value="UniProtKB-UniRule"/>
</dbReference>
<dbReference type="GO" id="GO:0035999">
    <property type="term" value="P:tetrahydrofolate interconversion"/>
    <property type="evidence" value="ECO:0007669"/>
    <property type="project" value="UniProtKB-UniRule"/>
</dbReference>
<dbReference type="CDD" id="cd00378">
    <property type="entry name" value="SHMT"/>
    <property type="match status" value="1"/>
</dbReference>
<dbReference type="FunFam" id="3.40.640.10:FF:000001">
    <property type="entry name" value="Serine hydroxymethyltransferase"/>
    <property type="match status" value="1"/>
</dbReference>
<dbReference type="Gene3D" id="3.90.1150.10">
    <property type="entry name" value="Aspartate Aminotransferase, domain 1"/>
    <property type="match status" value="1"/>
</dbReference>
<dbReference type="Gene3D" id="3.40.640.10">
    <property type="entry name" value="Type I PLP-dependent aspartate aminotransferase-like (Major domain)"/>
    <property type="match status" value="1"/>
</dbReference>
<dbReference type="HAMAP" id="MF_00051">
    <property type="entry name" value="SHMT"/>
    <property type="match status" value="1"/>
</dbReference>
<dbReference type="InterPro" id="IPR015424">
    <property type="entry name" value="PyrdxlP-dep_Trfase"/>
</dbReference>
<dbReference type="InterPro" id="IPR015421">
    <property type="entry name" value="PyrdxlP-dep_Trfase_major"/>
</dbReference>
<dbReference type="InterPro" id="IPR015422">
    <property type="entry name" value="PyrdxlP-dep_Trfase_small"/>
</dbReference>
<dbReference type="InterPro" id="IPR001085">
    <property type="entry name" value="Ser_HO-MeTrfase"/>
</dbReference>
<dbReference type="InterPro" id="IPR049943">
    <property type="entry name" value="Ser_HO-MeTrfase-like"/>
</dbReference>
<dbReference type="InterPro" id="IPR019798">
    <property type="entry name" value="Ser_HO-MeTrfase_PLP_BS"/>
</dbReference>
<dbReference type="InterPro" id="IPR039429">
    <property type="entry name" value="SHMT-like_dom"/>
</dbReference>
<dbReference type="NCBIfam" id="NF000586">
    <property type="entry name" value="PRK00011.1"/>
    <property type="match status" value="1"/>
</dbReference>
<dbReference type="PANTHER" id="PTHR11680">
    <property type="entry name" value="SERINE HYDROXYMETHYLTRANSFERASE"/>
    <property type="match status" value="1"/>
</dbReference>
<dbReference type="PANTHER" id="PTHR11680:SF35">
    <property type="entry name" value="SERINE HYDROXYMETHYLTRANSFERASE 1"/>
    <property type="match status" value="1"/>
</dbReference>
<dbReference type="Pfam" id="PF00464">
    <property type="entry name" value="SHMT"/>
    <property type="match status" value="1"/>
</dbReference>
<dbReference type="PIRSF" id="PIRSF000412">
    <property type="entry name" value="SHMT"/>
    <property type="match status" value="1"/>
</dbReference>
<dbReference type="SUPFAM" id="SSF53383">
    <property type="entry name" value="PLP-dependent transferases"/>
    <property type="match status" value="1"/>
</dbReference>
<dbReference type="PROSITE" id="PS00096">
    <property type="entry name" value="SHMT"/>
    <property type="match status" value="1"/>
</dbReference>
<sequence length="439" mass="47045">MNAPHRDETTASHRDDGFFTESLESRDPEIFAASQKELGRQRDEIELIASENIVSAAVMEAQGGVMTNKYAEGYPGRRYYGGCQYVDIAEELAIDRAKQLFGCDFANVQPNSGSQANQGVFTALLQPGDTILGMSLDAGGHLTHGARPNQSGKWFNAVQYGVREGDLEIDYDQIAALAAEHKPKMIIAGGSAIPRIIDFARMREIADTIGAYLLVDMAHFAGMVASGHYPSPFPHAHVATTTTHKTLRGPRGGMIVTNDEAIAKKVNSAIFPGIQGGPLMHVIAGKAVAFGEALRPEFRDYQTQVIANAQALAAQLIKGGLDIVTGGTDTHLMLVDLRAKGVKGNATEKALGRAHITCNKNGIPFDTEKPMVTSGLRLGSPAGTTRGFGEAEFRQIADWIVEVVDGLAANGEDANDAVEAKVRGEVQALCDRFPIYPNL</sequence>
<proteinExistence type="inferred from homology"/>